<sequence length="179" mass="20625">MLSLDFLDDVRRMNKRQLYYQVLNFGMIVSSALMIWKGLMVITGSESPIVVVLSGSMEPAFHRGDLLFLTNRVEDPIRVGEIVVFRIEGREIPIVHRVLKIHEKQNGHIKFLTKGDNNAVDDRGLYKQGQHWLEKKDVVGRARGFVPYIGIVTILMNDYPKFKYAVLFLLGLFVLVHRE</sequence>
<comment type="function">
    <text evidence="3">Catalytic component of the signal peptidase complex (SPC) which catalyzes the cleavage of N-terminal signal sequences from nascent proteins as they are translocated into the lumen of the endoplasmic reticulum (PubMed:34388369). Specifically cleaves N-terminal signal peptides that contain a hydrophobic alpha-helix (h-region) shorter than 18-20 amino acids (PubMed:34388369).</text>
</comment>
<comment type="catalytic activity">
    <reaction evidence="3">
        <text>Cleavage of hydrophobic, N-terminal signal or leader sequences from secreted and periplasmic proteins.</text>
        <dbReference type="EC" id="3.4.21.89"/>
    </reaction>
</comment>
<comment type="subunit">
    <text evidence="3">Component of the signal peptidase complex paralog A (SPC-A) composed of a catalytic subunit SEC11A and three accessory subunits SPCS1, SPCS2 and SPCS3 (PubMed:34388369). Within the complex, interacts with SPCS2 and SPCS3 (PubMed:34388369). The complex induces a local thinning of the ER membrane which is used to measure the length of the signal peptide (SP) h-region of protein substrates (PubMed:34388369). This ensures the selectivity of the complex towards h-regions shorter than 18-20 amino acids (PubMed:34388369).</text>
</comment>
<comment type="interaction">
    <interactant intactId="EBI-1042500">
        <id>P67812</id>
    </interactant>
    <interactant intactId="EBI-10225815">
        <id>Q08AM2</id>
        <label>ADAM33</label>
    </interactant>
    <organismsDiffer>false</organismsDiffer>
    <experiments>3</experiments>
</comment>
<comment type="interaction">
    <interactant intactId="EBI-1042500">
        <id>P67812</id>
    </interactant>
    <interactant intactId="EBI-7936069">
        <id>P06276</id>
        <label>BCHE</label>
    </interactant>
    <organismsDiffer>false</organismsDiffer>
    <experiments>3</experiments>
</comment>
<comment type="interaction">
    <interactant intactId="EBI-1042500">
        <id>P67812</id>
    </interactant>
    <interactant intactId="EBI-6166040">
        <id>P61009</id>
        <label>SPCS3</label>
    </interactant>
    <organismsDiffer>false</organismsDiffer>
    <experiments>6</experiments>
</comment>
<comment type="subcellular location">
    <subcellularLocation>
        <location evidence="1">Endoplasmic reticulum membrane</location>
        <topology evidence="1">Single-pass type II membrane protein</topology>
    </subcellularLocation>
</comment>
<comment type="alternative products">
    <event type="alternative splicing"/>
    <isoform>
        <id>P67812-1</id>
        <name>1</name>
        <sequence type="displayed"/>
    </isoform>
    <isoform>
        <id>P67812-2</id>
        <name>2</name>
        <sequence type="described" ref="VSP_055052"/>
    </isoform>
    <isoform>
        <id>P67812-3</id>
        <name>3</name>
        <sequence type="described" ref="VSP_055053"/>
    </isoform>
    <isoform>
        <id>P67812-4</id>
        <name>4</name>
        <sequence type="described" ref="VSP_055054 VSP_055055"/>
    </isoform>
</comment>
<comment type="domain">
    <text evidence="3 6">The C-terminal short (CTS) helix is essential for catalytic activity (PubMed:34388369). It may be accommodated as a transmembrane helix in the thinned membrane environment of the complex, similarly to the signal peptide in the complex substrates (Probable).</text>
</comment>
<comment type="similarity">
    <text evidence="5">Belongs to the peptidase S26B family.</text>
</comment>
<feature type="chain" id="PRO_0000109543" description="Signal peptidase complex catalytic subunit SEC11A">
    <location>
        <begin position="1"/>
        <end position="179"/>
    </location>
</feature>
<feature type="topological domain" description="Cytoplasmic" evidence="1">
    <location>
        <begin position="1"/>
        <end position="16"/>
    </location>
</feature>
<feature type="transmembrane region" description="Helical; Signal-anchor for type II membrane protein" evidence="2">
    <location>
        <begin position="17"/>
        <end position="36"/>
    </location>
</feature>
<feature type="topological domain" description="Lumenal" evidence="1">
    <location>
        <begin position="37"/>
        <end position="179"/>
    </location>
</feature>
<feature type="region of interest" description="C-terminal short (CTS) helix" evidence="3">
    <location>
        <begin position="165"/>
        <end position="176"/>
    </location>
</feature>
<feature type="active site" description="Charge relay system" evidence="6">
    <location>
        <position position="56"/>
    </location>
</feature>
<feature type="active site" description="Charge relay system" evidence="6">
    <location>
        <position position="96"/>
    </location>
</feature>
<feature type="active site" description="Charge relay system" evidence="6">
    <location>
        <position position="122"/>
    </location>
</feature>
<feature type="splice variant" id="VSP_055052" description="In isoform 2." evidence="4">
    <location>
        <begin position="1"/>
        <end position="26"/>
    </location>
</feature>
<feature type="splice variant" id="VSP_055053" description="In isoform 3." evidence="5">
    <original>FVPYIGIVTILMNDYPKFKYAVLFLLGLFVLVHRE</original>
    <variation>MQFSFCWVYSCWFIVSKKPALLFLGRCHSFRYWMFGVDTGL</variation>
    <location>
        <begin position="145"/>
        <end position="179"/>
    </location>
</feature>
<feature type="splice variant" id="VSP_055054" description="In isoform 4." evidence="5">
    <original>VPYIGIVTILMNDYPKFKY</original>
    <variation>YQENSSVEDRNYLFLILEL</variation>
    <location>
        <begin position="146"/>
        <end position="164"/>
    </location>
</feature>
<feature type="splice variant" id="VSP_055055" description="In isoform 4." evidence="5">
    <location>
        <begin position="165"/>
        <end position="179"/>
    </location>
</feature>
<feature type="mutagenesis site" description="Loss of catalytic activity." evidence="3">
    <original>S</original>
    <variation>A</variation>
    <location>
        <position position="56"/>
    </location>
</feature>
<feature type="mutagenesis site" description="Slight reduction in catalytic activity; when associated with R-116." evidence="3">
    <original>R</original>
    <variation>D</variation>
    <location>
        <position position="97"/>
    </location>
</feature>
<feature type="mutagenesis site" description="Moderate reduction in catalytic activity. Reduces protein stability." evidence="3">
    <original>D</original>
    <variation>N</variation>
    <location>
        <position position="116"/>
    </location>
</feature>
<feature type="mutagenesis site" description="Slight reduction in catalytic activity; when associated with D-97." evidence="3">
    <original>D</original>
    <variation>R</variation>
    <location>
        <position position="116"/>
    </location>
</feature>
<feature type="mutagenesis site" description="No effect on catalytic activity or protein stability." evidence="3">
    <original>D</original>
    <variation>N</variation>
    <location>
        <position position="121"/>
    </location>
</feature>
<feature type="mutagenesis site" description="Loss of catalytic activity. Slight reduction in protein stability." evidence="3">
    <original>D</original>
    <variation>N</variation>
    <location>
        <position position="122"/>
    </location>
</feature>
<feature type="sequence conflict" description="In Ref. 1; AAD19640 and 7; AAC36354." evidence="5" ref="1 7">
    <original>Y</original>
    <variation>C</variation>
    <location>
        <position position="19"/>
    </location>
</feature>
<feature type="sequence conflict" description="In Ref. 4; BAD96944." evidence="5" ref="4">
    <original>I</original>
    <variation>T</variation>
    <location>
        <position position="42"/>
    </location>
</feature>
<feature type="sequence conflict" description="In Ref. 1; AAD19640 and 7; AAC36354." evidence="5" ref="1 7">
    <original>K</original>
    <variation>R</variation>
    <location>
        <position position="163"/>
    </location>
</feature>
<accession>P67812</accession>
<accession>B2RAD7</accession>
<accession>B4DUL4</accession>
<accession>H0YK72</accession>
<accession>H0YK83</accession>
<accession>O75957</accession>
<accession>P21378</accession>
<accession>Q53FQ8</accession>
<keyword id="KW-0002">3D-structure</keyword>
<keyword id="KW-0025">Alternative splicing</keyword>
<keyword id="KW-0256">Endoplasmic reticulum</keyword>
<keyword id="KW-0378">Hydrolase</keyword>
<keyword id="KW-0472">Membrane</keyword>
<keyword id="KW-0645">Protease</keyword>
<keyword id="KW-1267">Proteomics identification</keyword>
<keyword id="KW-1185">Reference proteome</keyword>
<keyword id="KW-0735">Signal-anchor</keyword>
<keyword id="KW-0812">Transmembrane</keyword>
<keyword id="KW-1133">Transmembrane helix</keyword>
<reference key="1">
    <citation type="submission" date="1998-11" db="EMBL/GenBank/DDBJ databases">
        <title>Human signal peptidase 18 kDa subunit, mRNA complete cds.</title>
        <authorList>
            <person name="Xie T.P."/>
            <person name="Wu M.C."/>
            <person name="Liu X.P."/>
            <person name="Wang H.J."/>
            <person name="Liang Y."/>
            <person name="Guo Y.J."/>
        </authorList>
    </citation>
    <scope>NUCLEOTIDE SEQUENCE [MRNA] (ISOFORM 1)</scope>
    <source>
        <tissue>Hepatoma</tissue>
    </source>
</reference>
<reference key="2">
    <citation type="submission" date="1998-04" db="EMBL/GenBank/DDBJ databases">
        <title>Human microsomal signal peptidase.</title>
        <authorList>
            <person name="Zhang J."/>
            <person name="Mao M."/>
            <person name="Liu T."/>
            <person name="Wu J."/>
            <person name="Zhang Q."/>
            <person name="Fu G."/>
            <person name="Shen Y."/>
            <person name="Zhou J."/>
            <person name="Yu Y."/>
            <person name="Wang Z."/>
            <person name="Chen S."/>
            <person name="Chen Z."/>
        </authorList>
    </citation>
    <scope>NUCLEOTIDE SEQUENCE [MRNA] (ISOFORM 1)</scope>
</reference>
<reference key="3">
    <citation type="journal article" date="2004" name="Nat. Genet.">
        <title>Complete sequencing and characterization of 21,243 full-length human cDNAs.</title>
        <authorList>
            <person name="Ota T."/>
            <person name="Suzuki Y."/>
            <person name="Nishikawa T."/>
            <person name="Otsuki T."/>
            <person name="Sugiyama T."/>
            <person name="Irie R."/>
            <person name="Wakamatsu A."/>
            <person name="Hayashi K."/>
            <person name="Sato H."/>
            <person name="Nagai K."/>
            <person name="Kimura K."/>
            <person name="Makita H."/>
            <person name="Sekine M."/>
            <person name="Obayashi M."/>
            <person name="Nishi T."/>
            <person name="Shibahara T."/>
            <person name="Tanaka T."/>
            <person name="Ishii S."/>
            <person name="Yamamoto J."/>
            <person name="Saito K."/>
            <person name="Kawai Y."/>
            <person name="Isono Y."/>
            <person name="Nakamura Y."/>
            <person name="Nagahari K."/>
            <person name="Murakami K."/>
            <person name="Yasuda T."/>
            <person name="Iwayanagi T."/>
            <person name="Wagatsuma M."/>
            <person name="Shiratori A."/>
            <person name="Sudo H."/>
            <person name="Hosoiri T."/>
            <person name="Kaku Y."/>
            <person name="Kodaira H."/>
            <person name="Kondo H."/>
            <person name="Sugawara M."/>
            <person name="Takahashi M."/>
            <person name="Kanda K."/>
            <person name="Yokoi T."/>
            <person name="Furuya T."/>
            <person name="Kikkawa E."/>
            <person name="Omura Y."/>
            <person name="Abe K."/>
            <person name="Kamihara K."/>
            <person name="Katsuta N."/>
            <person name="Sato K."/>
            <person name="Tanikawa M."/>
            <person name="Yamazaki M."/>
            <person name="Ninomiya K."/>
            <person name="Ishibashi T."/>
            <person name="Yamashita H."/>
            <person name="Murakawa K."/>
            <person name="Fujimori K."/>
            <person name="Tanai H."/>
            <person name="Kimata M."/>
            <person name="Watanabe M."/>
            <person name="Hiraoka S."/>
            <person name="Chiba Y."/>
            <person name="Ishida S."/>
            <person name="Ono Y."/>
            <person name="Takiguchi S."/>
            <person name="Watanabe S."/>
            <person name="Yosida M."/>
            <person name="Hotuta T."/>
            <person name="Kusano J."/>
            <person name="Kanehori K."/>
            <person name="Takahashi-Fujii A."/>
            <person name="Hara H."/>
            <person name="Tanase T.-O."/>
            <person name="Nomura Y."/>
            <person name="Togiya S."/>
            <person name="Komai F."/>
            <person name="Hara R."/>
            <person name="Takeuchi K."/>
            <person name="Arita M."/>
            <person name="Imose N."/>
            <person name="Musashino K."/>
            <person name="Yuuki H."/>
            <person name="Oshima A."/>
            <person name="Sasaki N."/>
            <person name="Aotsuka S."/>
            <person name="Yoshikawa Y."/>
            <person name="Matsunawa H."/>
            <person name="Ichihara T."/>
            <person name="Shiohata N."/>
            <person name="Sano S."/>
            <person name="Moriya S."/>
            <person name="Momiyama H."/>
            <person name="Satoh N."/>
            <person name="Takami S."/>
            <person name="Terashima Y."/>
            <person name="Suzuki O."/>
            <person name="Nakagawa S."/>
            <person name="Senoh A."/>
            <person name="Mizoguchi H."/>
            <person name="Goto Y."/>
            <person name="Shimizu F."/>
            <person name="Wakebe H."/>
            <person name="Hishigaki H."/>
            <person name="Watanabe T."/>
            <person name="Sugiyama A."/>
            <person name="Takemoto M."/>
            <person name="Kawakami B."/>
            <person name="Yamazaki M."/>
            <person name="Watanabe K."/>
            <person name="Kumagai A."/>
            <person name="Itakura S."/>
            <person name="Fukuzumi Y."/>
            <person name="Fujimori Y."/>
            <person name="Komiyama M."/>
            <person name="Tashiro H."/>
            <person name="Tanigami A."/>
            <person name="Fujiwara T."/>
            <person name="Ono T."/>
            <person name="Yamada K."/>
            <person name="Fujii Y."/>
            <person name="Ozaki K."/>
            <person name="Hirao M."/>
            <person name="Ohmori Y."/>
            <person name="Kawabata A."/>
            <person name="Hikiji T."/>
            <person name="Kobatake N."/>
            <person name="Inagaki H."/>
            <person name="Ikema Y."/>
            <person name="Okamoto S."/>
            <person name="Okitani R."/>
            <person name="Kawakami T."/>
            <person name="Noguchi S."/>
            <person name="Itoh T."/>
            <person name="Shigeta K."/>
            <person name="Senba T."/>
            <person name="Matsumura K."/>
            <person name="Nakajima Y."/>
            <person name="Mizuno T."/>
            <person name="Morinaga M."/>
            <person name="Sasaki M."/>
            <person name="Togashi T."/>
            <person name="Oyama M."/>
            <person name="Hata H."/>
            <person name="Watanabe M."/>
            <person name="Komatsu T."/>
            <person name="Mizushima-Sugano J."/>
            <person name="Satoh T."/>
            <person name="Shirai Y."/>
            <person name="Takahashi Y."/>
            <person name="Nakagawa K."/>
            <person name="Okumura K."/>
            <person name="Nagase T."/>
            <person name="Nomura N."/>
            <person name="Kikuchi H."/>
            <person name="Masuho Y."/>
            <person name="Yamashita R."/>
            <person name="Nakai K."/>
            <person name="Yada T."/>
            <person name="Nakamura Y."/>
            <person name="Ohara O."/>
            <person name="Isogai T."/>
            <person name="Sugano S."/>
        </authorList>
    </citation>
    <scope>NUCLEOTIDE SEQUENCE [LARGE SCALE MRNA] (ISOFORMS 1 AND 2)</scope>
    <source>
        <tissue>Neuroblastoma</tissue>
        <tissue>Skeletal muscle</tissue>
    </source>
</reference>
<reference key="4">
    <citation type="submission" date="2005-04" db="EMBL/GenBank/DDBJ databases">
        <authorList>
            <person name="Suzuki Y."/>
            <person name="Sugano S."/>
            <person name="Totoki Y."/>
            <person name="Toyoda A."/>
            <person name="Takeda T."/>
            <person name="Sakaki Y."/>
            <person name="Tanaka A."/>
            <person name="Yokoyama S."/>
        </authorList>
    </citation>
    <scope>NUCLEOTIDE SEQUENCE [LARGE SCALE MRNA] (ISOFORM 1)</scope>
    <source>
        <tissue>Gastric mucosa</tissue>
    </source>
</reference>
<reference key="5">
    <citation type="journal article" date="2006" name="Nature">
        <title>Analysis of the DNA sequence and duplication history of human chromosome 15.</title>
        <authorList>
            <person name="Zody M.C."/>
            <person name="Garber M."/>
            <person name="Sharpe T."/>
            <person name="Young S.K."/>
            <person name="Rowen L."/>
            <person name="O'Neill K."/>
            <person name="Whittaker C.A."/>
            <person name="Kamal M."/>
            <person name="Chang J.L."/>
            <person name="Cuomo C.A."/>
            <person name="Dewar K."/>
            <person name="FitzGerald M.G."/>
            <person name="Kodira C.D."/>
            <person name="Madan A."/>
            <person name="Qin S."/>
            <person name="Yang X."/>
            <person name="Abbasi N."/>
            <person name="Abouelleil A."/>
            <person name="Arachchi H.M."/>
            <person name="Baradarani L."/>
            <person name="Birditt B."/>
            <person name="Bloom S."/>
            <person name="Bloom T."/>
            <person name="Borowsky M.L."/>
            <person name="Burke J."/>
            <person name="Butler J."/>
            <person name="Cook A."/>
            <person name="DeArellano K."/>
            <person name="DeCaprio D."/>
            <person name="Dorris L. III"/>
            <person name="Dors M."/>
            <person name="Eichler E.E."/>
            <person name="Engels R."/>
            <person name="Fahey J."/>
            <person name="Fleetwood P."/>
            <person name="Friedman C."/>
            <person name="Gearin G."/>
            <person name="Hall J.L."/>
            <person name="Hensley G."/>
            <person name="Johnson E."/>
            <person name="Jones C."/>
            <person name="Kamat A."/>
            <person name="Kaur A."/>
            <person name="Locke D.P."/>
            <person name="Madan A."/>
            <person name="Munson G."/>
            <person name="Jaffe D.B."/>
            <person name="Lui A."/>
            <person name="Macdonald P."/>
            <person name="Mauceli E."/>
            <person name="Naylor J.W."/>
            <person name="Nesbitt R."/>
            <person name="Nicol R."/>
            <person name="O'Leary S.B."/>
            <person name="Ratcliffe A."/>
            <person name="Rounsley S."/>
            <person name="She X."/>
            <person name="Sneddon K.M.B."/>
            <person name="Stewart S."/>
            <person name="Sougnez C."/>
            <person name="Stone S.M."/>
            <person name="Topham K."/>
            <person name="Vincent D."/>
            <person name="Wang S."/>
            <person name="Zimmer A.R."/>
            <person name="Birren B.W."/>
            <person name="Hood L."/>
            <person name="Lander E.S."/>
            <person name="Nusbaum C."/>
        </authorList>
    </citation>
    <scope>NUCLEOTIDE SEQUENCE [LARGE SCALE GENOMIC DNA]</scope>
</reference>
<reference key="6">
    <citation type="submission" date="2005-07" db="EMBL/GenBank/DDBJ databases">
        <authorList>
            <person name="Mural R.J."/>
            <person name="Istrail S."/>
            <person name="Sutton G.G."/>
            <person name="Florea L."/>
            <person name="Halpern A.L."/>
            <person name="Mobarry C.M."/>
            <person name="Lippert R."/>
            <person name="Walenz B."/>
            <person name="Shatkay H."/>
            <person name="Dew I."/>
            <person name="Miller J.R."/>
            <person name="Flanigan M.J."/>
            <person name="Edwards N.J."/>
            <person name="Bolanos R."/>
            <person name="Fasulo D."/>
            <person name="Halldorsson B.V."/>
            <person name="Hannenhalli S."/>
            <person name="Turner R."/>
            <person name="Yooseph S."/>
            <person name="Lu F."/>
            <person name="Nusskern D.R."/>
            <person name="Shue B.C."/>
            <person name="Zheng X.H."/>
            <person name="Zhong F."/>
            <person name="Delcher A.L."/>
            <person name="Huson D.H."/>
            <person name="Kravitz S.A."/>
            <person name="Mouchard L."/>
            <person name="Reinert K."/>
            <person name="Remington K.A."/>
            <person name="Clark A.G."/>
            <person name="Waterman M.S."/>
            <person name="Eichler E.E."/>
            <person name="Adams M.D."/>
            <person name="Hunkapiller M.W."/>
            <person name="Myers E.W."/>
            <person name="Venter J.C."/>
        </authorList>
    </citation>
    <scope>NUCLEOTIDE SEQUENCE [LARGE SCALE GENOMIC DNA]</scope>
</reference>
<reference key="7">
    <citation type="journal article" date="2004" name="Genome Res.">
        <title>The status, quality, and expansion of the NIH full-length cDNA project: the Mammalian Gene Collection (MGC).</title>
        <authorList>
            <consortium name="The MGC Project Team"/>
        </authorList>
    </citation>
    <scope>NUCLEOTIDE SEQUENCE [LARGE SCALE MRNA] (ISOFORM 1)</scope>
    <source>
        <tissue>Colon</tissue>
        <tissue>Muscle</tissue>
    </source>
</reference>
<reference key="8">
    <citation type="submission" date="1998-09" db="EMBL/GenBank/DDBJ databases">
        <authorList>
            <person name="Xie T.P."/>
            <person name="Liu X.P."/>
            <person name="Wang H.J."/>
            <person name="Liang Y."/>
            <person name="Wang H."/>
            <person name="Qian W.Z."/>
            <person name="Wei L.X."/>
            <person name="Liu Y.J."/>
            <person name="He P."/>
            <person name="Guo Y.J."/>
        </authorList>
    </citation>
    <scope>NUCLEOTIDE SEQUENCE [MRNA] OF 13-179</scope>
    <source>
        <tissue>Hepatoma</tissue>
    </source>
</reference>
<reference key="9">
    <citation type="journal article" date="2011" name="BMC Syst. Biol.">
        <title>Initial characterization of the human central proteome.</title>
        <authorList>
            <person name="Burkard T.R."/>
            <person name="Planyavsky M."/>
            <person name="Kaupe I."/>
            <person name="Breitwieser F.P."/>
            <person name="Buerckstuemmer T."/>
            <person name="Bennett K.L."/>
            <person name="Superti-Furga G."/>
            <person name="Colinge J."/>
        </authorList>
    </citation>
    <scope>IDENTIFICATION BY MASS SPECTROMETRY [LARGE SCALE ANALYSIS]</scope>
</reference>
<reference key="10">
    <citation type="journal article" date="2012" name="Mol. Cell. Proteomics">
        <title>Comparative large-scale characterisation of plant vs. mammal proteins reveals similar and idiosyncratic N-alpha acetylation features.</title>
        <authorList>
            <person name="Bienvenut W.V."/>
            <person name="Sumpton D."/>
            <person name="Martinez A."/>
            <person name="Lilla S."/>
            <person name="Espagne C."/>
            <person name="Meinnel T."/>
            <person name="Giglione C."/>
        </authorList>
    </citation>
    <scope>IDENTIFICATION BY MASS SPECTROMETRY [LARGE SCALE ANALYSIS]</scope>
</reference>
<reference key="11">
    <citation type="journal article" date="2012" name="Proc. Natl. Acad. Sci. U.S.A.">
        <title>N-terminal acetylome analyses and functional insights of the N-terminal acetyltransferase NatB.</title>
        <authorList>
            <person name="Van Damme P."/>
            <person name="Lasa M."/>
            <person name="Polevoda B."/>
            <person name="Gazquez C."/>
            <person name="Elosegui-Artola A."/>
            <person name="Kim D.S."/>
            <person name="De Juan-Pardo E."/>
            <person name="Demeyer K."/>
            <person name="Hole K."/>
            <person name="Larrea E."/>
            <person name="Timmerman E."/>
            <person name="Prieto J."/>
            <person name="Arnesen T."/>
            <person name="Sherman F."/>
            <person name="Gevaert K."/>
            <person name="Aldabe R."/>
        </authorList>
    </citation>
    <scope>IDENTIFICATION BY MASS SPECTROMETRY [LARGE SCALE ANALYSIS]</scope>
</reference>
<reference key="12">
    <citation type="journal article" date="2014" name="J. Proteomics">
        <title>An enzyme assisted RP-RPLC approach for in-depth analysis of human liver phosphoproteome.</title>
        <authorList>
            <person name="Bian Y."/>
            <person name="Song C."/>
            <person name="Cheng K."/>
            <person name="Dong M."/>
            <person name="Wang F."/>
            <person name="Huang J."/>
            <person name="Sun D."/>
            <person name="Wang L."/>
            <person name="Ye M."/>
            <person name="Zou H."/>
        </authorList>
    </citation>
    <scope>IDENTIFICATION BY MASS SPECTROMETRY [LARGE SCALE ANALYSIS]</scope>
    <source>
        <tissue>Liver</tissue>
    </source>
</reference>
<reference key="13">
    <citation type="journal article" date="2015" name="Proteomics">
        <title>N-terminome analysis of the human mitochondrial proteome.</title>
        <authorList>
            <person name="Vaca Jacome A.S."/>
            <person name="Rabilloud T."/>
            <person name="Schaeffer-Reiss C."/>
            <person name="Rompais M."/>
            <person name="Ayoub D."/>
            <person name="Lane L."/>
            <person name="Bairoch A."/>
            <person name="Van Dorsselaer A."/>
            <person name="Carapito C."/>
        </authorList>
    </citation>
    <scope>IDENTIFICATION BY MASS SPECTROMETRY [LARGE SCALE ANALYSIS]</scope>
</reference>
<reference evidence="7" key="14">
    <citation type="journal article" date="2021" name="Mol. Cell">
        <title>Structure of the human signal peptidase complex reveals the determinants for signal peptide cleavage.</title>
        <authorList>
            <person name="Liaci A.M."/>
            <person name="Steigenberger B."/>
            <person name="Telles de Souza P.C."/>
            <person name="Tamara S."/>
            <person name="Groellers-Mulderij M."/>
            <person name="Ogrissek P."/>
            <person name="Marrink S.J."/>
            <person name="Scheltema R.A."/>
            <person name="Foerster F."/>
        </authorList>
    </citation>
    <scope>STRUCTURE BY ELECTRON MICROSCOPY (4.9 ANGSTROMS)</scope>
    <scope>FUNCTION</scope>
    <scope>CATALYTIC ACTIVITY</scope>
    <scope>IDENTIFICATION IN THE SIGNAL PEPTIDASE COMPLEX</scope>
    <scope>DOMAIN</scope>
    <scope>ACTIVE SITE</scope>
    <scope>MUTAGENESIS OF SER-56; ARG-97; ASP-116; ASP-121 AND ASP-122</scope>
</reference>
<dbReference type="EC" id="3.4.21.89" evidence="3"/>
<dbReference type="EMBL" id="AF108945">
    <property type="protein sequence ID" value="AAD19640.1"/>
    <property type="molecule type" value="mRNA"/>
</dbReference>
<dbReference type="EMBL" id="AF061737">
    <property type="protein sequence ID" value="AAD17526.1"/>
    <property type="molecule type" value="mRNA"/>
</dbReference>
<dbReference type="EMBL" id="AK300693">
    <property type="protein sequence ID" value="BAG62376.1"/>
    <property type="molecule type" value="mRNA"/>
</dbReference>
<dbReference type="EMBL" id="AK314146">
    <property type="protein sequence ID" value="BAG36834.1"/>
    <property type="molecule type" value="mRNA"/>
</dbReference>
<dbReference type="EMBL" id="AK223224">
    <property type="protein sequence ID" value="BAD96944.1"/>
    <property type="molecule type" value="mRNA"/>
</dbReference>
<dbReference type="EMBL" id="AC087732">
    <property type="status" value="NOT_ANNOTATED_CDS"/>
    <property type="molecule type" value="Genomic_DNA"/>
</dbReference>
<dbReference type="EMBL" id="AC115102">
    <property type="status" value="NOT_ANNOTATED_CDS"/>
    <property type="molecule type" value="Genomic_DNA"/>
</dbReference>
<dbReference type="EMBL" id="CH471101">
    <property type="protein sequence ID" value="EAX01952.1"/>
    <property type="molecule type" value="Genomic_DNA"/>
</dbReference>
<dbReference type="EMBL" id="CH471101">
    <property type="protein sequence ID" value="EAX01954.1"/>
    <property type="molecule type" value="Genomic_DNA"/>
</dbReference>
<dbReference type="EMBL" id="CH471101">
    <property type="protein sequence ID" value="EAX01956.1"/>
    <property type="molecule type" value="Genomic_DNA"/>
</dbReference>
<dbReference type="EMBL" id="BC000359">
    <property type="protein sequence ID" value="AAH00359.3"/>
    <property type="molecule type" value="mRNA"/>
</dbReference>
<dbReference type="EMBL" id="BC014508">
    <property type="protein sequence ID" value="AAH14508.1"/>
    <property type="molecule type" value="mRNA"/>
</dbReference>
<dbReference type="EMBL" id="AF090315">
    <property type="protein sequence ID" value="AAC36354.1"/>
    <property type="molecule type" value="mRNA"/>
</dbReference>
<dbReference type="CCDS" id="CCDS45340.1">
    <molecule id="P67812-1"/>
</dbReference>
<dbReference type="CCDS" id="CCDS61742.1">
    <molecule id="P67812-2"/>
</dbReference>
<dbReference type="CCDS" id="CCDS61743.1">
    <molecule id="P67812-3"/>
</dbReference>
<dbReference type="CCDS" id="CCDS61744.1">
    <molecule id="P67812-4"/>
</dbReference>
<dbReference type="RefSeq" id="NP_001258847.1">
    <molecule id="P67812-2"/>
    <property type="nucleotide sequence ID" value="NM_001271918.2"/>
</dbReference>
<dbReference type="RefSeq" id="NP_001258848.1">
    <property type="nucleotide sequence ID" value="NM_001271919.1"/>
</dbReference>
<dbReference type="RefSeq" id="NP_001258849.1">
    <molecule id="P67812-4"/>
    <property type="nucleotide sequence ID" value="NM_001271920.2"/>
</dbReference>
<dbReference type="RefSeq" id="NP_001258850.1">
    <property type="nucleotide sequence ID" value="NM_001271921.1"/>
</dbReference>
<dbReference type="RefSeq" id="NP_001258851.1">
    <molecule id="P67812-3"/>
    <property type="nucleotide sequence ID" value="NM_001271922.2"/>
</dbReference>
<dbReference type="RefSeq" id="NP_055115.1">
    <molecule id="P67812-1"/>
    <property type="nucleotide sequence ID" value="NM_014300.4"/>
</dbReference>
<dbReference type="RefSeq" id="XP_054233621.1">
    <molecule id="P67812-1"/>
    <property type="nucleotide sequence ID" value="XM_054377646.1"/>
</dbReference>
<dbReference type="RefSeq" id="XP_054233622.1">
    <molecule id="P67812-1"/>
    <property type="nucleotide sequence ID" value="XM_054377647.1"/>
</dbReference>
<dbReference type="RefSeq" id="XP_054233623.1">
    <molecule id="P67812-1"/>
    <property type="nucleotide sequence ID" value="XM_054377648.1"/>
</dbReference>
<dbReference type="PDB" id="7P2P">
    <property type="method" value="EM"/>
    <property type="resolution" value="4.90 A"/>
    <property type="chains" value="A=1-179"/>
</dbReference>
<dbReference type="PDBsum" id="7P2P"/>
<dbReference type="EMDB" id="EMD-13171"/>
<dbReference type="SMR" id="P67812"/>
<dbReference type="BioGRID" id="117037">
    <property type="interactions" value="143"/>
</dbReference>
<dbReference type="ComplexPortal" id="CPX-2847">
    <property type="entry name" value="Signal peptidase complex, SEC11A variant"/>
</dbReference>
<dbReference type="DIP" id="DIP-50359N"/>
<dbReference type="FunCoup" id="P67812">
    <property type="interactions" value="1391"/>
</dbReference>
<dbReference type="IntAct" id="P67812">
    <property type="interactions" value="68"/>
</dbReference>
<dbReference type="MINT" id="P67812"/>
<dbReference type="MEROPS" id="S26.009"/>
<dbReference type="GlyGen" id="P67812">
    <property type="glycosylation" value="1 site, 1 O-linked glycan (1 site)"/>
</dbReference>
<dbReference type="iPTMnet" id="P67812"/>
<dbReference type="MetOSite" id="P67812"/>
<dbReference type="PhosphoSitePlus" id="P67812"/>
<dbReference type="SwissPalm" id="P67812"/>
<dbReference type="BioMuta" id="SEC11A"/>
<dbReference type="DMDM" id="54039634"/>
<dbReference type="jPOST" id="P67812"/>
<dbReference type="MassIVE" id="P67812"/>
<dbReference type="PaxDb" id="9606-ENSP00000452697"/>
<dbReference type="PeptideAtlas" id="P67812"/>
<dbReference type="ProteomicsDB" id="39571"/>
<dbReference type="ProteomicsDB" id="39580"/>
<dbReference type="ProteomicsDB" id="5197"/>
<dbReference type="ProteomicsDB" id="57523">
    <molecule id="P67812-1"/>
</dbReference>
<dbReference type="Pumba" id="P67812"/>
<dbReference type="TopDownProteomics" id="P67812-1">
    <molecule id="P67812-1"/>
</dbReference>
<dbReference type="Antibodypedia" id="43614">
    <property type="antibodies" value="184 antibodies from 24 providers"/>
</dbReference>
<dbReference type="DNASU" id="23478"/>
<dbReference type="Ensembl" id="ENST00000268220.12">
    <molecule id="P67812-1"/>
    <property type="protein sequence ID" value="ENSP00000268220.7"/>
    <property type="gene ID" value="ENSG00000140612.14"/>
</dbReference>
<dbReference type="Ensembl" id="ENST00000455959.7">
    <molecule id="P67812-2"/>
    <property type="protein sequence ID" value="ENSP00000413121.3"/>
    <property type="gene ID" value="ENSG00000140612.14"/>
</dbReference>
<dbReference type="Ensembl" id="ENST00000558134.5">
    <molecule id="P67812-3"/>
    <property type="protein sequence ID" value="ENSP00000452697.1"/>
    <property type="gene ID" value="ENSG00000140612.14"/>
</dbReference>
<dbReference type="Ensembl" id="ENST00000560266.5">
    <molecule id="P67812-4"/>
    <property type="protein sequence ID" value="ENSP00000452684.1"/>
    <property type="gene ID" value="ENSG00000140612.14"/>
</dbReference>
<dbReference type="GeneID" id="23478"/>
<dbReference type="KEGG" id="hsa:23478"/>
<dbReference type="MANE-Select" id="ENST00000268220.12">
    <property type="protein sequence ID" value="ENSP00000268220.7"/>
    <property type="RefSeq nucleotide sequence ID" value="NM_014300.4"/>
    <property type="RefSeq protein sequence ID" value="NP_055115.1"/>
</dbReference>
<dbReference type="UCSC" id="uc002blb.3">
    <molecule id="P67812-1"/>
    <property type="organism name" value="human"/>
</dbReference>
<dbReference type="AGR" id="HGNC:17718"/>
<dbReference type="CTD" id="23478"/>
<dbReference type="DisGeNET" id="23478"/>
<dbReference type="GeneCards" id="SEC11A"/>
<dbReference type="HGNC" id="HGNC:17718">
    <property type="gene designation" value="SEC11A"/>
</dbReference>
<dbReference type="HPA" id="ENSG00000140612">
    <property type="expression patterns" value="Low tissue specificity"/>
</dbReference>
<dbReference type="MIM" id="618258">
    <property type="type" value="gene"/>
</dbReference>
<dbReference type="neXtProt" id="NX_P67812"/>
<dbReference type="OpenTargets" id="ENSG00000140612"/>
<dbReference type="PharmGKB" id="PA162402586"/>
<dbReference type="VEuPathDB" id="HostDB:ENSG00000140612"/>
<dbReference type="eggNOG" id="KOG3342">
    <property type="taxonomic scope" value="Eukaryota"/>
</dbReference>
<dbReference type="GeneTree" id="ENSGT00390000015600"/>
<dbReference type="HOGENOM" id="CLU_089996_0_0_1"/>
<dbReference type="InParanoid" id="P67812"/>
<dbReference type="OMA" id="ILMNEYP"/>
<dbReference type="OrthoDB" id="10257561at2759"/>
<dbReference type="PAN-GO" id="P67812">
    <property type="GO annotations" value="3 GO annotations based on evolutionary models"/>
</dbReference>
<dbReference type="PhylomeDB" id="P67812"/>
<dbReference type="TreeFam" id="TF313648"/>
<dbReference type="PathwayCommons" id="P67812"/>
<dbReference type="Reactome" id="R-HSA-1799339">
    <property type="pathway name" value="SRP-dependent cotranslational protein targeting to membrane"/>
</dbReference>
<dbReference type="Reactome" id="R-HSA-381771">
    <property type="pathway name" value="Synthesis, secretion, and inactivation of Glucagon-like Peptide-1 (GLP-1)"/>
</dbReference>
<dbReference type="Reactome" id="R-HSA-400511">
    <property type="pathway name" value="Synthesis, secretion, and inactivation of Glucose-dependent Insulinotropic Polypeptide (GIP)"/>
</dbReference>
<dbReference type="Reactome" id="R-HSA-422085">
    <property type="pathway name" value="Synthesis, secretion, and deacylation of Ghrelin"/>
</dbReference>
<dbReference type="Reactome" id="R-HSA-9828806">
    <property type="pathway name" value="Maturation of hRSV A proteins"/>
</dbReference>
<dbReference type="SignaLink" id="P67812"/>
<dbReference type="BioGRID-ORCS" id="23478">
    <property type="hits" value="26 hits in 1152 CRISPR screens"/>
</dbReference>
<dbReference type="ChiTaRS" id="SEC11A">
    <property type="organism name" value="human"/>
</dbReference>
<dbReference type="GenomeRNAi" id="23478"/>
<dbReference type="Pharos" id="P67812">
    <property type="development level" value="Tbio"/>
</dbReference>
<dbReference type="PRO" id="PR:P67812"/>
<dbReference type="Proteomes" id="UP000005640">
    <property type="component" value="Chromosome 15"/>
</dbReference>
<dbReference type="RNAct" id="P67812">
    <property type="molecule type" value="protein"/>
</dbReference>
<dbReference type="Bgee" id="ENSG00000140612">
    <property type="expression patterns" value="Expressed in germinal epithelium of ovary and 211 other cell types or tissues"/>
</dbReference>
<dbReference type="ExpressionAtlas" id="P67812">
    <property type="expression patterns" value="baseline and differential"/>
</dbReference>
<dbReference type="GO" id="GO:0005789">
    <property type="term" value="C:endoplasmic reticulum membrane"/>
    <property type="evidence" value="ECO:0000314"/>
    <property type="project" value="ComplexPortal"/>
</dbReference>
<dbReference type="GO" id="GO:0005787">
    <property type="term" value="C:signal peptidase complex"/>
    <property type="evidence" value="ECO:0000314"/>
    <property type="project" value="UniProtKB"/>
</dbReference>
<dbReference type="GO" id="GO:0008233">
    <property type="term" value="F:peptidase activity"/>
    <property type="evidence" value="ECO:0000318"/>
    <property type="project" value="GO_Central"/>
</dbReference>
<dbReference type="GO" id="GO:0004252">
    <property type="term" value="F:serine-type endopeptidase activity"/>
    <property type="evidence" value="ECO:0000314"/>
    <property type="project" value="UniProtKB"/>
</dbReference>
<dbReference type="GO" id="GO:0009615">
    <property type="term" value="P:response to virus"/>
    <property type="evidence" value="ECO:0000304"/>
    <property type="project" value="Reactome"/>
</dbReference>
<dbReference type="GO" id="GO:0006465">
    <property type="term" value="P:signal peptide processing"/>
    <property type="evidence" value="ECO:0000314"/>
    <property type="project" value="UniProtKB"/>
</dbReference>
<dbReference type="CDD" id="cd06530">
    <property type="entry name" value="S26_SPase_I"/>
    <property type="match status" value="1"/>
</dbReference>
<dbReference type="FunFam" id="2.10.109.10:FF:000003">
    <property type="entry name" value="Signal peptidase complex catalytic subunit SEC11"/>
    <property type="match status" value="1"/>
</dbReference>
<dbReference type="Gene3D" id="2.10.109.10">
    <property type="entry name" value="Umud Fragment, subunit A"/>
    <property type="match status" value="1"/>
</dbReference>
<dbReference type="InterPro" id="IPR036286">
    <property type="entry name" value="LexA/Signal_pep-like_sf"/>
</dbReference>
<dbReference type="InterPro" id="IPR019758">
    <property type="entry name" value="Pept_S26A_signal_pept_1_CS"/>
</dbReference>
<dbReference type="InterPro" id="IPR019756">
    <property type="entry name" value="Pept_S26A_signal_pept_1_Ser-AS"/>
</dbReference>
<dbReference type="InterPro" id="IPR015927">
    <property type="entry name" value="Peptidase_S24_S26A/B/C"/>
</dbReference>
<dbReference type="InterPro" id="IPR019533">
    <property type="entry name" value="Peptidase_S26"/>
</dbReference>
<dbReference type="InterPro" id="IPR001733">
    <property type="entry name" value="Peptidase_S26B"/>
</dbReference>
<dbReference type="NCBIfam" id="TIGR02228">
    <property type="entry name" value="sigpep_I_arch"/>
    <property type="match status" value="1"/>
</dbReference>
<dbReference type="PANTHER" id="PTHR10806">
    <property type="entry name" value="SIGNAL PEPTIDASE COMPLEX CATALYTIC SUBUNIT SEC11"/>
    <property type="match status" value="1"/>
</dbReference>
<dbReference type="PANTHER" id="PTHR10806:SF28">
    <property type="entry name" value="SIGNAL PEPTIDASE COMPLEX CATALYTIC SUBUNIT SEC11B-RELATED"/>
    <property type="match status" value="1"/>
</dbReference>
<dbReference type="Pfam" id="PF00717">
    <property type="entry name" value="Peptidase_S24"/>
    <property type="match status" value="1"/>
</dbReference>
<dbReference type="PRINTS" id="PR00728">
    <property type="entry name" value="SIGNALPTASE"/>
</dbReference>
<dbReference type="SUPFAM" id="SSF51306">
    <property type="entry name" value="LexA/Signal peptidase"/>
    <property type="match status" value="1"/>
</dbReference>
<dbReference type="PROSITE" id="PS00501">
    <property type="entry name" value="SPASE_I_1"/>
    <property type="match status" value="1"/>
</dbReference>
<dbReference type="PROSITE" id="PS00761">
    <property type="entry name" value="SPASE_I_3"/>
    <property type="match status" value="1"/>
</dbReference>
<name>SC11A_HUMAN</name>
<proteinExistence type="evidence at protein level"/>
<gene>
    <name type="primary">SEC11A</name>
    <name type="synonym">SEC11L1</name>
    <name type="synonym">SPC18</name>
    <name type="synonym">SPCS4A</name>
</gene>
<protein>
    <recommendedName>
        <fullName>Signal peptidase complex catalytic subunit SEC11A</fullName>
        <ecNumber evidence="3">3.4.21.89</ecNumber>
    </recommendedName>
    <alternativeName>
        <fullName>Endopeptidase SP18</fullName>
    </alternativeName>
    <alternativeName>
        <fullName>Microsomal signal peptidase 18 kDa subunit</fullName>
        <shortName>SPase 18 kDa subunit</shortName>
    </alternativeName>
    <alternativeName>
        <fullName>SEC11 homolog A</fullName>
    </alternativeName>
    <alternativeName>
        <fullName>SEC11-like protein 1</fullName>
    </alternativeName>
    <alternativeName>
        <fullName>SPC18</fullName>
    </alternativeName>
</protein>
<organism>
    <name type="scientific">Homo sapiens</name>
    <name type="common">Human</name>
    <dbReference type="NCBI Taxonomy" id="9606"/>
    <lineage>
        <taxon>Eukaryota</taxon>
        <taxon>Metazoa</taxon>
        <taxon>Chordata</taxon>
        <taxon>Craniata</taxon>
        <taxon>Vertebrata</taxon>
        <taxon>Euteleostomi</taxon>
        <taxon>Mammalia</taxon>
        <taxon>Eutheria</taxon>
        <taxon>Euarchontoglires</taxon>
        <taxon>Primates</taxon>
        <taxon>Haplorrhini</taxon>
        <taxon>Catarrhini</taxon>
        <taxon>Hominidae</taxon>
        <taxon>Homo</taxon>
    </lineage>
</organism>
<evidence type="ECO:0000250" key="1">
    <source>
        <dbReference type="UniProtKB" id="P67811"/>
    </source>
</evidence>
<evidence type="ECO:0000255" key="2"/>
<evidence type="ECO:0000269" key="3">
    <source>
    </source>
</evidence>
<evidence type="ECO:0000303" key="4">
    <source>
    </source>
</evidence>
<evidence type="ECO:0000305" key="5"/>
<evidence type="ECO:0000305" key="6">
    <source>
    </source>
</evidence>
<evidence type="ECO:0007744" key="7">
    <source>
        <dbReference type="PDB" id="7P2P"/>
    </source>
</evidence>